<gene>
    <name type="primary">ibsD</name>
    <name type="ordered locus">b4664</name>
    <name type="ordered locus">JW3023.1</name>
</gene>
<name>IBSD_ECOLI</name>
<reference key="1">
    <citation type="journal article" date="1997" name="Science">
        <title>The complete genome sequence of Escherichia coli K-12.</title>
        <authorList>
            <person name="Blattner F.R."/>
            <person name="Plunkett G. III"/>
            <person name="Bloch C.A."/>
            <person name="Perna N.T."/>
            <person name="Burland V."/>
            <person name="Riley M."/>
            <person name="Collado-Vides J."/>
            <person name="Glasner J.D."/>
            <person name="Rode C.K."/>
            <person name="Mayhew G.F."/>
            <person name="Gregor J."/>
            <person name="Davis N.W."/>
            <person name="Kirkpatrick H.A."/>
            <person name="Goeden M.A."/>
            <person name="Rose D.J."/>
            <person name="Mau B."/>
            <person name="Shao Y."/>
        </authorList>
    </citation>
    <scope>NUCLEOTIDE SEQUENCE [LARGE SCALE GENOMIC DNA]</scope>
    <source>
        <strain>K12 / MG1655 / ATCC 47076</strain>
    </source>
</reference>
<reference key="2">
    <citation type="journal article" date="2006" name="Mol. Syst. Biol.">
        <title>Highly accurate genome sequences of Escherichia coli K-12 strains MG1655 and W3110.</title>
        <authorList>
            <person name="Hayashi K."/>
            <person name="Morooka N."/>
            <person name="Yamamoto Y."/>
            <person name="Fujita K."/>
            <person name="Isono K."/>
            <person name="Choi S."/>
            <person name="Ohtsubo E."/>
            <person name="Baba T."/>
            <person name="Wanner B.L."/>
            <person name="Mori H."/>
            <person name="Horiuchi T."/>
        </authorList>
    </citation>
    <scope>NUCLEOTIDE SEQUENCE [LARGE SCALE GENOMIC DNA]</scope>
    <source>
        <strain>K12 / W3110 / ATCC 27325 / DSM 5911</strain>
    </source>
</reference>
<reference key="3">
    <citation type="journal article" date="2008" name="Mol. Microbiol.">
        <title>Repression of small toxic protein synthesis by the Sib and OhsC small RNAs.</title>
        <authorList>
            <person name="Fozo E.M."/>
            <person name="Kawano M."/>
            <person name="Fontaine F."/>
            <person name="Kaya Y."/>
            <person name="Mendieta K.S."/>
            <person name="Jones K.L."/>
            <person name="Ocampo A."/>
            <person name="Rudd K.E."/>
            <person name="Storz G."/>
        </authorList>
    </citation>
    <scope>IDENTIFICATION</scope>
    <scope>DISRUPTION PHENOTYPE</scope>
    <source>
        <strain>K12 / MG1655 / ATCC 47076</strain>
    </source>
</reference>
<feature type="chain" id="PRO_0000386423" description="Small toxic protein IbsD">
    <location>
        <begin position="1"/>
        <end position="19"/>
    </location>
</feature>
<feature type="transmembrane region" description="Helical" evidence="1">
    <location>
        <begin position="4"/>
        <end position="18"/>
    </location>
</feature>
<keyword id="KW-0472">Membrane</keyword>
<keyword id="KW-1185">Reference proteome</keyword>
<keyword id="KW-1277">Toxin-antitoxin system</keyword>
<keyword id="KW-0812">Transmembrane</keyword>
<keyword id="KW-1133">Transmembrane helix</keyword>
<protein>
    <recommendedName>
        <fullName>Small toxic protein IbsD</fullName>
    </recommendedName>
</protein>
<evidence type="ECO:0000255" key="1"/>
<evidence type="ECO:0000269" key="2">
    <source>
    </source>
</evidence>
<evidence type="ECO:0000305" key="3"/>
<organism>
    <name type="scientific">Escherichia coli (strain K12)</name>
    <dbReference type="NCBI Taxonomy" id="83333"/>
    <lineage>
        <taxon>Bacteria</taxon>
        <taxon>Pseudomonadati</taxon>
        <taxon>Pseudomonadota</taxon>
        <taxon>Gammaproteobacteria</taxon>
        <taxon>Enterobacterales</taxon>
        <taxon>Enterobacteriaceae</taxon>
        <taxon>Escherichia</taxon>
    </lineage>
</organism>
<dbReference type="EMBL" id="U00096">
    <property type="protein sequence ID" value="ACO60008.1"/>
    <property type="molecule type" value="Genomic_DNA"/>
</dbReference>
<dbReference type="EMBL" id="AP009048">
    <property type="status" value="NOT_ANNOTATED_CDS"/>
    <property type="molecule type" value="Genomic_DNA"/>
</dbReference>
<dbReference type="RefSeq" id="WP_001387081.1">
    <property type="nucleotide sequence ID" value="NZ_STEB01000001.1"/>
</dbReference>
<dbReference type="RefSeq" id="YP_002791256.1">
    <property type="nucleotide sequence ID" value="NC_000913.3"/>
</dbReference>
<dbReference type="EnsemblBacteria" id="ACO60008">
    <property type="protein sequence ID" value="ACO60008"/>
    <property type="gene ID" value="b4664"/>
</dbReference>
<dbReference type="GeneID" id="7751628"/>
<dbReference type="KEGG" id="eco:b4664"/>
<dbReference type="InParanoid" id="C1P616"/>
<dbReference type="BioCyc" id="EcoCyc:MONOMER0-2856"/>
<dbReference type="PRO" id="PR:C1P616"/>
<dbReference type="Proteomes" id="UP000000625">
    <property type="component" value="Chromosome"/>
</dbReference>
<dbReference type="GO" id="GO:0016020">
    <property type="term" value="C:membrane"/>
    <property type="evidence" value="ECO:0007669"/>
    <property type="project" value="UniProtKB-SubCell"/>
</dbReference>
<dbReference type="InterPro" id="IPR025881">
    <property type="entry name" value="Toxin_Ibs"/>
</dbReference>
<dbReference type="Pfam" id="PF13956">
    <property type="entry name" value="Ibs_toxin"/>
    <property type="match status" value="1"/>
</dbReference>
<accession>C1P616</accession>
<sequence length="19" mass="2151">MMKLVIILIVLLLVSFAAY</sequence>
<comment type="function">
    <text>Toxic component of a type I toxin-antitoxin (TA) system.</text>
</comment>
<comment type="subcellular location">
    <subcellularLocation>
        <location evidence="3">Membrane</location>
        <topology evidence="3">Single-pass membrane protein</topology>
    </subcellularLocation>
</comment>
<comment type="induction">
    <text evidence="3">The sibD sRNA probably represses expression of ibsD mRNA, either by destabilizing the transcript and/or preventing its translation (Probable). Expression of the proteinaceous toxin is controlled by antisense sRNA SibD.</text>
</comment>
<comment type="disruption phenotype">
    <text evidence="2">None seen. An isbD overproducing strain cannot be made in the absence of the sibD gene.</text>
</comment>
<comment type="miscellaneous">
    <text>Part of the SIBd repeat region (formerly known as QUAD1d), encoded on the opposite strand from the sibD (formerly known as rygD) RNA.</text>
</comment>
<comment type="similarity">
    <text evidence="3">Belongs to the Ibs toxic protein family.</text>
</comment>
<proteinExistence type="inferred from homology"/>